<proteinExistence type="inferred from homology"/>
<evidence type="ECO:0000255" key="1">
    <source>
        <dbReference type="HAMAP-Rule" id="MF_00835"/>
    </source>
</evidence>
<accession>Q83E64</accession>
<name>BIOC1_COXBU</name>
<keyword id="KW-0093">Biotin biosynthesis</keyword>
<keyword id="KW-0489">Methyltransferase</keyword>
<keyword id="KW-1185">Reference proteome</keyword>
<keyword id="KW-0949">S-adenosyl-L-methionine</keyword>
<keyword id="KW-0808">Transferase</keyword>
<reference key="1">
    <citation type="journal article" date="2003" name="Proc. Natl. Acad. Sci. U.S.A.">
        <title>Complete genome sequence of the Q-fever pathogen, Coxiella burnetii.</title>
        <authorList>
            <person name="Seshadri R."/>
            <person name="Paulsen I.T."/>
            <person name="Eisen J.A."/>
            <person name="Read T.D."/>
            <person name="Nelson K.E."/>
            <person name="Nelson W.C."/>
            <person name="Ward N.L."/>
            <person name="Tettelin H."/>
            <person name="Davidsen T.M."/>
            <person name="Beanan M.J."/>
            <person name="DeBoy R.T."/>
            <person name="Daugherty S.C."/>
            <person name="Brinkac L.M."/>
            <person name="Madupu R."/>
            <person name="Dodson R.J."/>
            <person name="Khouri H.M."/>
            <person name="Lee K.H."/>
            <person name="Carty H.A."/>
            <person name="Scanlan D."/>
            <person name="Heinzen R.A."/>
            <person name="Thompson H.A."/>
            <person name="Samuel J.E."/>
            <person name="Fraser C.M."/>
            <person name="Heidelberg J.F."/>
        </authorList>
    </citation>
    <scope>NUCLEOTIDE SEQUENCE [LARGE SCALE GENOMIC DNA]</scope>
    <source>
        <strain>RSA 493 / Nine Mile phase I</strain>
    </source>
</reference>
<comment type="function">
    <text evidence="1">Converts the free carboxyl group of a malonyl-thioester to its methyl ester by transfer of a methyl group from S-adenosyl-L-methionine (SAM). It allows to synthesize pimeloyl-ACP via the fatty acid synthetic pathway.</text>
</comment>
<comment type="catalytic activity">
    <reaction evidence="1">
        <text>malonyl-[ACP] + S-adenosyl-L-methionine = malonyl-[ACP] methyl ester + S-adenosyl-L-homocysteine</text>
        <dbReference type="Rhea" id="RHEA:17105"/>
        <dbReference type="Rhea" id="RHEA-COMP:9623"/>
        <dbReference type="Rhea" id="RHEA-COMP:9954"/>
        <dbReference type="ChEBI" id="CHEBI:57856"/>
        <dbReference type="ChEBI" id="CHEBI:59789"/>
        <dbReference type="ChEBI" id="CHEBI:78449"/>
        <dbReference type="ChEBI" id="CHEBI:78845"/>
        <dbReference type="EC" id="2.1.1.197"/>
    </reaction>
</comment>
<comment type="pathway">
    <text evidence="1">Cofactor biosynthesis; biotin biosynthesis.</text>
</comment>
<comment type="similarity">
    <text evidence="1">Belongs to the methyltransferase superfamily.</text>
</comment>
<protein>
    <recommendedName>
        <fullName evidence="1">Malonyl-[acyl-carrier protein] O-methyltransferase 1</fullName>
        <shortName evidence="1">Malonyl-ACP O-methyltransferase 1</shortName>
        <ecNumber evidence="1">2.1.1.197</ecNumber>
    </recommendedName>
    <alternativeName>
        <fullName evidence="1">Biotin synthesis protein BioC 1</fullName>
    </alternativeName>
</protein>
<sequence length="282" mass="31709">MPKTQFQVDQNAVKKALHAAARTYDNVGMVPKAIADRLLERLDFIRLNPLCVVDVGARTGYATQQLEERYREAIVVGLDFSVAILKAASSKMMVGEYTALPFADRSVDLIFSNLAFQWSSDLQQTLQECHRVLKPGGLLLFSTVGPDTLKELHSSFADGHRHVHPFYDMHDIGDMLTQLRFTDPVMDTERLIVHYSSVPQLIKDLKQLGAQNASQDRLKGLMGKTQWRQMLTNYENCREENGALPATVEVIYGHAFGTESNSFKNANGEEVTVPIDKIIRRN</sequence>
<gene>
    <name evidence="1" type="primary">bioC1</name>
    <name type="ordered locus">CBU_0467</name>
</gene>
<feature type="chain" id="PRO_0000412491" description="Malonyl-[acyl-carrier protein] O-methyltransferase 1">
    <location>
        <begin position="1"/>
        <end position="282"/>
    </location>
</feature>
<organism>
    <name type="scientific">Coxiella burnetii (strain RSA 493 / Nine Mile phase I)</name>
    <dbReference type="NCBI Taxonomy" id="227377"/>
    <lineage>
        <taxon>Bacteria</taxon>
        <taxon>Pseudomonadati</taxon>
        <taxon>Pseudomonadota</taxon>
        <taxon>Gammaproteobacteria</taxon>
        <taxon>Legionellales</taxon>
        <taxon>Coxiellaceae</taxon>
        <taxon>Coxiella</taxon>
    </lineage>
</organism>
<dbReference type="EC" id="2.1.1.197" evidence="1"/>
<dbReference type="EMBL" id="AE016828">
    <property type="protein sequence ID" value="AAO90016.1"/>
    <property type="molecule type" value="Genomic_DNA"/>
</dbReference>
<dbReference type="RefSeq" id="WP_010957596.1">
    <property type="nucleotide sequence ID" value="NC_002971.4"/>
</dbReference>
<dbReference type="SMR" id="Q83E64"/>
<dbReference type="STRING" id="227377.CBU_0467"/>
<dbReference type="EnsemblBacteria" id="AAO90016">
    <property type="protein sequence ID" value="AAO90016"/>
    <property type="gene ID" value="CBU_0467"/>
</dbReference>
<dbReference type="KEGG" id="cbu:CBU_0467"/>
<dbReference type="PATRIC" id="fig|227377.7.peg.457"/>
<dbReference type="eggNOG" id="COG2226">
    <property type="taxonomic scope" value="Bacteria"/>
</dbReference>
<dbReference type="HOGENOM" id="CLU_046586_2_1_6"/>
<dbReference type="OrthoDB" id="9760689at2"/>
<dbReference type="UniPathway" id="UPA00078"/>
<dbReference type="Proteomes" id="UP000002671">
    <property type="component" value="Chromosome"/>
</dbReference>
<dbReference type="GO" id="GO:0010340">
    <property type="term" value="F:carboxyl-O-methyltransferase activity"/>
    <property type="evidence" value="ECO:0007669"/>
    <property type="project" value="UniProtKB-UniRule"/>
</dbReference>
<dbReference type="GO" id="GO:0102130">
    <property type="term" value="F:malonyl-CoA methyltransferase activity"/>
    <property type="evidence" value="ECO:0007669"/>
    <property type="project" value="UniProtKB-EC"/>
</dbReference>
<dbReference type="GO" id="GO:0008757">
    <property type="term" value="F:S-adenosylmethionine-dependent methyltransferase activity"/>
    <property type="evidence" value="ECO:0007669"/>
    <property type="project" value="InterPro"/>
</dbReference>
<dbReference type="GO" id="GO:0009102">
    <property type="term" value="P:biotin biosynthetic process"/>
    <property type="evidence" value="ECO:0007669"/>
    <property type="project" value="UniProtKB-UniRule"/>
</dbReference>
<dbReference type="GO" id="GO:0032259">
    <property type="term" value="P:methylation"/>
    <property type="evidence" value="ECO:0007669"/>
    <property type="project" value="UniProtKB-KW"/>
</dbReference>
<dbReference type="CDD" id="cd02440">
    <property type="entry name" value="AdoMet_MTases"/>
    <property type="match status" value="1"/>
</dbReference>
<dbReference type="Gene3D" id="3.40.50.150">
    <property type="entry name" value="Vaccinia Virus protein VP39"/>
    <property type="match status" value="1"/>
</dbReference>
<dbReference type="HAMAP" id="MF_00835">
    <property type="entry name" value="BioC"/>
    <property type="match status" value="1"/>
</dbReference>
<dbReference type="InterPro" id="IPR011814">
    <property type="entry name" value="BioC"/>
</dbReference>
<dbReference type="InterPro" id="IPR050602">
    <property type="entry name" value="Malonyl-ACP_OMT"/>
</dbReference>
<dbReference type="InterPro" id="IPR013216">
    <property type="entry name" value="Methyltransf_11"/>
</dbReference>
<dbReference type="InterPro" id="IPR029063">
    <property type="entry name" value="SAM-dependent_MTases_sf"/>
</dbReference>
<dbReference type="NCBIfam" id="TIGR02072">
    <property type="entry name" value="BioC"/>
    <property type="match status" value="1"/>
</dbReference>
<dbReference type="PANTHER" id="PTHR13090">
    <property type="entry name" value="ARGININE-HYDROXYLASE NDUFAF5, MITOCHONDRIAL"/>
    <property type="match status" value="1"/>
</dbReference>
<dbReference type="PANTHER" id="PTHR13090:SF1">
    <property type="entry name" value="ARGININE-HYDROXYLASE NDUFAF5, MITOCHONDRIAL"/>
    <property type="match status" value="1"/>
</dbReference>
<dbReference type="Pfam" id="PF08241">
    <property type="entry name" value="Methyltransf_11"/>
    <property type="match status" value="1"/>
</dbReference>
<dbReference type="SUPFAM" id="SSF53335">
    <property type="entry name" value="S-adenosyl-L-methionine-dependent methyltransferases"/>
    <property type="match status" value="1"/>
</dbReference>